<reference key="1">
    <citation type="submission" date="2004-05" db="EMBL/GenBank/DDBJ databases">
        <title>Strain specific allelic variations in the rat FanCD2 coding sequence.</title>
        <authorList>
            <person name="Rosemann M.F."/>
            <person name="Ivashkevich A."/>
            <person name="Lichtmannegger J."/>
        </authorList>
    </citation>
    <scope>NUCLEOTIDE SEQUENCE [MRNA]</scope>
    <source>
        <strain>Wistar Kyoto</strain>
        <tissue>Liver</tissue>
    </source>
</reference>
<gene>
    <name type="primary">Fancd2</name>
</gene>
<evidence type="ECO:0000250" key="1"/>
<evidence type="ECO:0000250" key="2">
    <source>
        <dbReference type="UniProtKB" id="Q68Y81"/>
    </source>
</evidence>
<evidence type="ECO:0000250" key="3">
    <source>
        <dbReference type="UniProtKB" id="Q9BXW9"/>
    </source>
</evidence>
<evidence type="ECO:0000256" key="4">
    <source>
        <dbReference type="SAM" id="MobiDB-lite"/>
    </source>
</evidence>
<evidence type="ECO:0000305" key="5"/>
<accession>Q6IV68</accession>
<sequence length="1451" mass="163621">MVSKRSRLDFEDKETLAEDASKIMKQPLSKLAKKSCGSHEVEENGSVFVRLLKASGLTLKTGDNQNQLGVDQIIFQRKLFQALRKHPSYPKVIEEFVNGLESYTEDIDSLRNCLLSCERLQDEEASMGTFYSKSLIKLLLGIDILQPAIIKMLFEKVPQFLFESESRDGISMPRLIISQLKWLDRIVDSKDLTTQMMQLISVAPVNLQHDFITSLPEILGDSQHANVGKELSELLVQNTSLTVPILDVFSSLRLDPNFLSEIRQLVMGKLSSVRLEDLPVIVKFILHSVTDSTSLEVIAELREKLNVQHFTLPSRIQASQSKLKSKGLASSSGNQENSDKDCIVLLFDVIKSAIRYEKTISEAWIKAIERIQSAAEHKALDVAMLLIIYGTSTQTKKGVERLLRNKIQSDCIQEQLLDSTFSTHCLVLKDICPSILLLAQTLFHSQDQRIILFGSLLCKYAFKFFDTYCQQEVVGALVTHVCSGNEAEVDAALDVLLELIVLNASAMRLNAAFIKGILDYLENMSPQQIRKIFCILSTLAFSQQPGTSNHIQDDMHLVIRKQLSSTVFKYKLIGIIGAVTMAGIMAEDRTMPSNSTQRSASVSSEQHTQVTSLLQLVHSCTEHSPWASSLYYDEFANLIQERKLAPKTLEWVAQTIFNDFQDAFVVDFCAVPEGDFPFPVKALYGLEECNTQDGIVINLLPLFFQEFAKDVSQVTSQESSQKSMSPLCLASHFRLLRLCVARQHNGNLDEIDALLDCPLFLPDLEPGEKLESMSAKDRSLMCSLTFLTFNWFREVVNAFCQQTSPEMKGKVLSRLKDLVELQEILEKYLAVIPDYVPPFTSVDLDTLDVIPRSNSAVAAKSRHKGKTGGKKQKADSSTASCTDTLLTEDTSECDVAPSGKSQVDKESTGKEGKTFVSLQNYRAFFRELDIEVFSILHSGLVTKFILDTEMHTEATEVVQLGPAELLFLLEDLSQKLENRLTPSFTKRVCFFKNKGSRNIGFSHLHQRSVQDIVHCVVQLLTPMCNHLENIHNFFQCLGAENLSVNDKARVTAQEHYTMSSCYQKLLQVFHALLAWKGFTHQSNHRLLRSALEVLASRLKQTEEGQPLEELLSQSFSYLQNLQHSIPSFQCGLYLLRLLMALLEKSAVPTQKKEKLASLAKQLLCRAWPHGDKEKNPTFNDHLHDLLCIYLEHTDNVLKAIEEITGVGVPELVNAPKDASSSTFPTLTRHTFVIFFRVMMAELEKTVKGLQAGTATDSQQVHEEKLLYWNMAVRDFSILINLMKVFDSYPVLHVCLKYGRRFVEAFLKQCMPLLDFSFRKHRDDVLSLLQTLQLNTRLLHHLCGHSKIHQDTRLTKHVPLLKKSLELLVCRVKAMLVLNNCREAFWLGTLKNRDLQGEEIISQHPSSPENTSEDSEDGMTSYVSRNRAIEDGEDEANDGQDRDSDESDDSSS</sequence>
<organism>
    <name type="scientific">Rattus norvegicus</name>
    <name type="common">Rat</name>
    <dbReference type="NCBI Taxonomy" id="10116"/>
    <lineage>
        <taxon>Eukaryota</taxon>
        <taxon>Metazoa</taxon>
        <taxon>Chordata</taxon>
        <taxon>Craniata</taxon>
        <taxon>Vertebrata</taxon>
        <taxon>Euteleostomi</taxon>
        <taxon>Mammalia</taxon>
        <taxon>Eutheria</taxon>
        <taxon>Euarchontoglires</taxon>
        <taxon>Glires</taxon>
        <taxon>Rodentia</taxon>
        <taxon>Myomorpha</taxon>
        <taxon>Muroidea</taxon>
        <taxon>Muridae</taxon>
        <taxon>Murinae</taxon>
        <taxon>Rattus</taxon>
    </lineage>
</organism>
<keyword id="KW-0131">Cell cycle</keyword>
<keyword id="KW-0227">DNA damage</keyword>
<keyword id="KW-0234">DNA repair</keyword>
<keyword id="KW-1017">Isopeptide bond</keyword>
<keyword id="KW-0539">Nucleus</keyword>
<keyword id="KW-0597">Phosphoprotein</keyword>
<keyword id="KW-1185">Reference proteome</keyword>
<keyword id="KW-0832">Ubl conjugation</keyword>
<comment type="function">
    <text evidence="2 3">Required for maintenance of chromosomal stability (By similarity). Promotes accurate and efficient pairing of homologs during meiosis (By similarity). Involved in the repair of DNA double-strand breaks, both by homologous recombination and single-strand annealing (By similarity). The FANCI-FANCD2 complex binds and scans double-stranded DNA (dsDNA) for DNA damage; this complex stalls at DNA junctions between double-stranded DNA and single-stranded DNA (By similarity). May participate in S phase and G2 phase checkpoint activation upon DNA damage (By similarity). Plays a role in preventing breakage and loss of missegregating chromatin at the end of cell division, particularly after replication stress (By similarity). Promotes BRCA2/FANCD1 loading onto damaged chromatin (By similarity). May also be involved in B-cell immunoglobulin isotype switching (By similarity).</text>
</comment>
<comment type="subunit">
    <text evidence="2 3">Homodimer; cannot be ubiquitinated and does not bind DNA (By similarity). Part of a FANCI-FANCD2 heterodimeric complex that binds and scans dsDNA for DNA damage (By similarity). Interacts directly with FANCE and FANCI (By similarity). Interacts with USP1 and MEN1 (By similarity). The ubiquitinated form specifically interacts with BRCA1 and BLM (By similarity). Both the nonubiquitinated and the monoubiquitinated forms interact with BRCA2; this interaction is mediated by phosphorylated FANCG and the complex also includes XCCR3 (By similarity). The ubiquitinated form specifically interacts with MTMR15/FAN1 (via UBZ-type zinc finger), leading to recruit MTMR15/FAN1 to sites of DNA damage (By similarity). Interacts with DCLRE1B/Apollo (By similarity). Interacts with POLN (By similarity). Interacts with UHRF1 and UHRF2; these interactions promote FANCD2 activation (By similarity).</text>
</comment>
<comment type="subcellular location">
    <subcellularLocation>
        <location evidence="3">Nucleus</location>
    </subcellularLocation>
    <text evidence="3">Concentrates in nuclear foci during S phase and upon genotoxic stress.</text>
</comment>
<comment type="PTM">
    <text evidence="2 3">Monoubiquitinated on Lys-561 during S phase and upon genotoxic stress by FANCL in complex with E2 ligases UBE2T or UBE2W (By similarity). Deubiquitinated by USP1 as cells enter G2/M, or once DNA repair is completed (By similarity). Monoubiquitination requires the joint intervention of the FANC core complex, including FANCA, FANCB, FANCC, FANCE, FANCF, FANCG, and FANCM, and proteins involved in cell cycle checkpoints and DNA repair, including RPA1, ATR, CHEK1 and BRCA1, and is mediated by FANCL/PHF9 (By similarity). Monoubiquitination prevents DNA release from the FANCI-FANCD2 complex (By similarity). FANCD2 is only ubiquitinated in the FANCI-FANCD2 complex and the monoubiquitination of FANCD2 is promoted by phosphorylation of FANCI (By similarity). Ubiquitination is required for binding to chromatin, interaction with BRCA1, BRCA2 and MTMR15/FAN1, DNA repair, and normal cell cycle progression (By similarity).</text>
</comment>
<comment type="PTM">
    <text evidence="3">Phosphorylated on several sites including Ser-222 and Ser-1401 in response to genotoxic stress by ATM and/or ATR.</text>
</comment>
<comment type="similarity">
    <text evidence="5">Belongs to the Fanconi anemia protein FANCD2 family.</text>
</comment>
<comment type="sequence caution" evidence="5">
    <conflict type="erroneous initiation">
        <sequence resource="EMBL-CDS" id="AAT40425"/>
    </conflict>
</comment>
<proteinExistence type="evidence at transcript level"/>
<name>FACD2_RAT</name>
<feature type="chain" id="PRO_0000087170" description="Fanconi anemia group D2 protein homolog">
    <location>
        <begin position="1"/>
        <end position="1451"/>
    </location>
</feature>
<feature type="region of interest" description="Interaction with FANCE" evidence="1">
    <location>
        <begin position="1"/>
        <end position="291"/>
    </location>
</feature>
<feature type="region of interest" description="Interaction with BRCA2" evidence="1">
    <location>
        <begin position="248"/>
        <end position="359"/>
    </location>
</feature>
<feature type="region of interest" description="Disordered" evidence="4">
    <location>
        <begin position="858"/>
        <end position="879"/>
    </location>
</feature>
<feature type="region of interest" description="Disordered" evidence="4">
    <location>
        <begin position="1399"/>
        <end position="1451"/>
    </location>
</feature>
<feature type="compositionally biased region" description="Basic residues" evidence="4">
    <location>
        <begin position="860"/>
        <end position="871"/>
    </location>
</feature>
<feature type="compositionally biased region" description="Acidic residues" evidence="4">
    <location>
        <begin position="1430"/>
        <end position="1451"/>
    </location>
</feature>
<feature type="modified residue" description="Phosphoserine" evidence="3">
    <location>
        <position position="222"/>
    </location>
</feature>
<feature type="modified residue" description="Phosphoserine" evidence="3">
    <location>
        <position position="716"/>
    </location>
</feature>
<feature type="modified residue" description="Phosphoserine" evidence="3">
    <location>
        <position position="1257"/>
    </location>
</feature>
<feature type="modified residue" description="Phosphoserine" evidence="3">
    <location>
        <position position="1406"/>
    </location>
</feature>
<feature type="modified residue" description="Phosphoserine" evidence="3">
    <location>
        <position position="1414"/>
    </location>
</feature>
<feature type="cross-link" description="Glycyl lysine isopeptide (Lys-Gly) (interchain with G-Cter in ubiquitin)" evidence="3">
    <location>
        <position position="561"/>
    </location>
</feature>
<protein>
    <recommendedName>
        <fullName>Fanconi anemia group D2 protein homolog</fullName>
        <shortName>Protein FACD2</shortName>
    </recommendedName>
</protein>
<dbReference type="EMBL" id="AY621075">
    <property type="protein sequence ID" value="AAT40425.1"/>
    <property type="status" value="ALT_INIT"/>
    <property type="molecule type" value="mRNA"/>
</dbReference>
<dbReference type="RefSeq" id="NP_001001719.1">
    <property type="nucleotide sequence ID" value="NM_001001719.1"/>
</dbReference>
<dbReference type="SMR" id="Q6IV68"/>
<dbReference type="FunCoup" id="Q6IV68">
    <property type="interactions" value="2825"/>
</dbReference>
<dbReference type="STRING" id="10116.ENSRNOP00000073556"/>
<dbReference type="PhosphoSitePlus" id="Q6IV68"/>
<dbReference type="PaxDb" id="10116-ENSRNOP00000033638"/>
<dbReference type="GeneID" id="312641"/>
<dbReference type="KEGG" id="rno:312641"/>
<dbReference type="UCSC" id="RGD:1303172">
    <property type="organism name" value="rat"/>
</dbReference>
<dbReference type="AGR" id="RGD:1303172"/>
<dbReference type="CTD" id="2177"/>
<dbReference type="RGD" id="1303172">
    <property type="gene designation" value="Fancd2"/>
</dbReference>
<dbReference type="eggNOG" id="KOG4712">
    <property type="taxonomic scope" value="Eukaryota"/>
</dbReference>
<dbReference type="InParanoid" id="Q6IV68"/>
<dbReference type="PhylomeDB" id="Q6IV68"/>
<dbReference type="TreeFam" id="TF101106"/>
<dbReference type="Reactome" id="R-RNO-6783310">
    <property type="pathway name" value="Fanconi Anemia Pathway"/>
</dbReference>
<dbReference type="PRO" id="PR:Q6IV68"/>
<dbReference type="Proteomes" id="UP000002494">
    <property type="component" value="Unplaced"/>
</dbReference>
<dbReference type="GO" id="GO:0000793">
    <property type="term" value="C:condensed chromosome"/>
    <property type="evidence" value="ECO:0000266"/>
    <property type="project" value="RGD"/>
</dbReference>
<dbReference type="GO" id="GO:1990391">
    <property type="term" value="C:DNA repair complex"/>
    <property type="evidence" value="ECO:0000266"/>
    <property type="project" value="RGD"/>
</dbReference>
<dbReference type="GO" id="GO:0005634">
    <property type="term" value="C:nucleus"/>
    <property type="evidence" value="ECO:0000266"/>
    <property type="project" value="RGD"/>
</dbReference>
<dbReference type="GO" id="GO:0070182">
    <property type="term" value="F:DNA polymerase binding"/>
    <property type="evidence" value="ECO:0000266"/>
    <property type="project" value="RGD"/>
</dbReference>
<dbReference type="GO" id="GO:0048854">
    <property type="term" value="P:brain morphogenesis"/>
    <property type="evidence" value="ECO:0000266"/>
    <property type="project" value="RGD"/>
</dbReference>
<dbReference type="GO" id="GO:0034599">
    <property type="term" value="P:cellular response to oxidative stress"/>
    <property type="evidence" value="ECO:0000266"/>
    <property type="project" value="RGD"/>
</dbReference>
<dbReference type="GO" id="GO:0006974">
    <property type="term" value="P:DNA damage response"/>
    <property type="evidence" value="ECO:0000266"/>
    <property type="project" value="RGD"/>
</dbReference>
<dbReference type="GO" id="GO:1990918">
    <property type="term" value="P:double-strand break repair involved in meiotic recombination"/>
    <property type="evidence" value="ECO:0000318"/>
    <property type="project" value="GO_Central"/>
</dbReference>
<dbReference type="GO" id="GO:0007276">
    <property type="term" value="P:gamete generation"/>
    <property type="evidence" value="ECO:0000266"/>
    <property type="project" value="RGD"/>
</dbReference>
<dbReference type="GO" id="GO:0007129">
    <property type="term" value="P:homologous chromosome pairing at meiosis"/>
    <property type="evidence" value="ECO:0000266"/>
    <property type="project" value="RGD"/>
</dbReference>
<dbReference type="GO" id="GO:0036297">
    <property type="term" value="P:interstrand cross-link repair"/>
    <property type="evidence" value="ECO:0000318"/>
    <property type="project" value="GO_Central"/>
</dbReference>
<dbReference type="GO" id="GO:0031573">
    <property type="term" value="P:mitotic intra-S DNA damage checkpoint signaling"/>
    <property type="evidence" value="ECO:0000318"/>
    <property type="project" value="GO_Central"/>
</dbReference>
<dbReference type="GO" id="GO:0097150">
    <property type="term" value="P:neuronal stem cell population maintenance"/>
    <property type="evidence" value="ECO:0000266"/>
    <property type="project" value="RGD"/>
</dbReference>
<dbReference type="GO" id="GO:2000348">
    <property type="term" value="P:regulation of CD40 signaling pathway"/>
    <property type="evidence" value="ECO:0000266"/>
    <property type="project" value="RGD"/>
</dbReference>
<dbReference type="GO" id="GO:0050727">
    <property type="term" value="P:regulation of inflammatory response"/>
    <property type="evidence" value="ECO:0000266"/>
    <property type="project" value="RGD"/>
</dbReference>
<dbReference type="GO" id="GO:0045589">
    <property type="term" value="P:regulation of regulatory T cell differentiation"/>
    <property type="evidence" value="ECO:0000266"/>
    <property type="project" value="RGD"/>
</dbReference>
<dbReference type="GO" id="GO:0010332">
    <property type="term" value="P:response to gamma radiation"/>
    <property type="evidence" value="ECO:0000266"/>
    <property type="project" value="RGD"/>
</dbReference>
<dbReference type="CDD" id="cd11721">
    <property type="entry name" value="FANCD2"/>
    <property type="match status" value="1"/>
</dbReference>
<dbReference type="InterPro" id="IPR029448">
    <property type="entry name" value="FANCD2"/>
</dbReference>
<dbReference type="PANTHER" id="PTHR32086">
    <property type="entry name" value="FANCONI ANEMIA GROUP D2 PROTEIN"/>
    <property type="match status" value="1"/>
</dbReference>
<dbReference type="PANTHER" id="PTHR32086:SF0">
    <property type="entry name" value="FANCONI ANEMIA GROUP D2 PROTEIN"/>
    <property type="match status" value="1"/>
</dbReference>
<dbReference type="Pfam" id="PF14631">
    <property type="entry name" value="FancD2"/>
    <property type="match status" value="1"/>
</dbReference>